<comment type="function">
    <text evidence="1">NDH-1 shuttles electrons from NADH, via FMN and iron-sulfur (Fe-S) centers, to quinones in the respiratory chain. The immediate electron acceptor for the enzyme in this species is believed to be ubiquinone. Couples the redox reaction to proton translocation (for every two electrons transferred, four hydrogen ions are translocated across the cytoplasmic membrane), and thus conserves the redox energy in a proton gradient.</text>
</comment>
<comment type="catalytic activity">
    <reaction evidence="1">
        <text>a quinone + NADH + 5 H(+)(in) = a quinol + NAD(+) + 4 H(+)(out)</text>
        <dbReference type="Rhea" id="RHEA:57888"/>
        <dbReference type="ChEBI" id="CHEBI:15378"/>
        <dbReference type="ChEBI" id="CHEBI:24646"/>
        <dbReference type="ChEBI" id="CHEBI:57540"/>
        <dbReference type="ChEBI" id="CHEBI:57945"/>
        <dbReference type="ChEBI" id="CHEBI:132124"/>
    </reaction>
</comment>
<comment type="subunit">
    <text evidence="1">NDH-1 is composed of 14 different subunits. Subunits NuoA, H, J, K, L, M, N constitute the membrane sector of the complex.</text>
</comment>
<comment type="subcellular location">
    <subcellularLocation>
        <location evidence="1">Cell membrane</location>
        <topology evidence="1">Multi-pass membrane protein</topology>
    </subcellularLocation>
</comment>
<comment type="similarity">
    <text evidence="1">Belongs to the complex I subunit 2 family.</text>
</comment>
<reference key="1">
    <citation type="submission" date="2008-12" db="EMBL/GenBank/DDBJ databases">
        <title>Complete sequence of Chloroflexus aggregans DSM 9485.</title>
        <authorList>
            <consortium name="US DOE Joint Genome Institute"/>
            <person name="Lucas S."/>
            <person name="Copeland A."/>
            <person name="Lapidus A."/>
            <person name="Glavina del Rio T."/>
            <person name="Dalin E."/>
            <person name="Tice H."/>
            <person name="Pitluck S."/>
            <person name="Foster B."/>
            <person name="Larimer F."/>
            <person name="Land M."/>
            <person name="Hauser L."/>
            <person name="Kyrpides N."/>
            <person name="Mikhailova N."/>
            <person name="Bryant D.A."/>
            <person name="Richardson P."/>
        </authorList>
    </citation>
    <scope>NUCLEOTIDE SEQUENCE [LARGE SCALE GENOMIC DNA]</scope>
    <source>
        <strain>MD-66 / DSM 9485</strain>
    </source>
</reference>
<protein>
    <recommendedName>
        <fullName evidence="1">NADH-quinone oxidoreductase subunit N</fullName>
        <ecNumber evidence="1">7.1.1.-</ecNumber>
    </recommendedName>
    <alternativeName>
        <fullName evidence="1">NADH dehydrogenase I subunit N</fullName>
    </alternativeName>
    <alternativeName>
        <fullName evidence="1">NDH-1 subunit N</fullName>
    </alternativeName>
</protein>
<keyword id="KW-1003">Cell membrane</keyword>
<keyword id="KW-0472">Membrane</keyword>
<keyword id="KW-0520">NAD</keyword>
<keyword id="KW-0874">Quinone</keyword>
<keyword id="KW-1278">Translocase</keyword>
<keyword id="KW-0812">Transmembrane</keyword>
<keyword id="KW-1133">Transmembrane helix</keyword>
<keyword id="KW-0813">Transport</keyword>
<keyword id="KW-0830">Ubiquinone</keyword>
<name>NUON_CHLAD</name>
<proteinExistence type="inferred from homology"/>
<feature type="chain" id="PRO_0000391126" description="NADH-quinone oxidoreductase subunit N">
    <location>
        <begin position="1"/>
        <end position="489"/>
    </location>
</feature>
<feature type="transmembrane region" description="Helical" evidence="1">
    <location>
        <begin position="15"/>
        <end position="35"/>
    </location>
</feature>
<feature type="transmembrane region" description="Helical" evidence="1">
    <location>
        <begin position="44"/>
        <end position="64"/>
    </location>
</feature>
<feature type="transmembrane region" description="Helical" evidence="1">
    <location>
        <begin position="78"/>
        <end position="98"/>
    </location>
</feature>
<feature type="transmembrane region" description="Helical" evidence="1">
    <location>
        <begin position="106"/>
        <end position="126"/>
    </location>
</feature>
<feature type="transmembrane region" description="Helical" evidence="1">
    <location>
        <begin position="131"/>
        <end position="151"/>
    </location>
</feature>
<feature type="transmembrane region" description="Helical" evidence="1">
    <location>
        <begin position="166"/>
        <end position="186"/>
    </location>
</feature>
<feature type="transmembrane region" description="Helical" evidence="1">
    <location>
        <begin position="209"/>
        <end position="229"/>
    </location>
</feature>
<feature type="transmembrane region" description="Helical" evidence="1">
    <location>
        <begin position="244"/>
        <end position="264"/>
    </location>
</feature>
<feature type="transmembrane region" description="Helical" evidence="1">
    <location>
        <begin position="278"/>
        <end position="298"/>
    </location>
</feature>
<feature type="transmembrane region" description="Helical" evidence="1">
    <location>
        <begin position="306"/>
        <end position="326"/>
    </location>
</feature>
<feature type="transmembrane region" description="Helical" evidence="1">
    <location>
        <begin position="333"/>
        <end position="353"/>
    </location>
</feature>
<feature type="transmembrane region" description="Helical" evidence="1">
    <location>
        <begin position="378"/>
        <end position="398"/>
    </location>
</feature>
<feature type="transmembrane region" description="Helical" evidence="1">
    <location>
        <begin position="412"/>
        <end position="432"/>
    </location>
</feature>
<feature type="transmembrane region" description="Helical" evidence="1">
    <location>
        <begin position="459"/>
        <end position="479"/>
    </location>
</feature>
<evidence type="ECO:0000255" key="1">
    <source>
        <dbReference type="HAMAP-Rule" id="MF_00445"/>
    </source>
</evidence>
<accession>B8G6L3</accession>
<sequence length="489" mass="51916">MDSLTIPPVDLRLLAPLLVVVTWATVLLLVDVFFIPDGRKKLTGYLAIGGLVVAGLVGLPLWGVTGTTFGGMLRLDPFALTLTWIFLLIGILSITMSLDYLPGQGIEQGEYYPLIMFAVSGMILLAQGTDLIVLFLGIETLSITLYILTGFAYPRLTSEEAAMKYLVLGAFAAGFFVYGIALIFGATGSTRLGEIGAYAASRGIGDLNLTLLLGGAAMVLIAFSFKVALAPFHMWTPDVYEGSPTPVAAFMSVGTKGGALAALVRLLFEGLPTLNEYWLPVLAGLTALTMVVGNLGAVAQTNVKRMLAYSSIGHAGYVMLGVMVAGEQRGPEAFLFYMLVYALSNLGAFAVLIALEHQGENAWRLDDFAGLYQRQPLLAVAMAIFMFSLAGVPPMAGFMAKFYALTAAWEGGLPWLALVGVVTSAIAAFFYLRVIIRMFMTEPEGEPTPTLNRGLTVDIALAAIGTIAIGLIPAPVFALVERSLVVLGG</sequence>
<organism>
    <name type="scientific">Chloroflexus aggregans (strain MD-66 / DSM 9485)</name>
    <dbReference type="NCBI Taxonomy" id="326427"/>
    <lineage>
        <taxon>Bacteria</taxon>
        <taxon>Bacillati</taxon>
        <taxon>Chloroflexota</taxon>
        <taxon>Chloroflexia</taxon>
        <taxon>Chloroflexales</taxon>
        <taxon>Chloroflexineae</taxon>
        <taxon>Chloroflexaceae</taxon>
        <taxon>Chloroflexus</taxon>
    </lineage>
</organism>
<gene>
    <name evidence="1" type="primary">nuoN</name>
    <name type="ordered locus">Cagg_1036</name>
</gene>
<dbReference type="EC" id="7.1.1.-" evidence="1"/>
<dbReference type="EMBL" id="CP001337">
    <property type="protein sequence ID" value="ACL23950.1"/>
    <property type="molecule type" value="Genomic_DNA"/>
</dbReference>
<dbReference type="RefSeq" id="WP_012616314.1">
    <property type="nucleotide sequence ID" value="NC_011831.1"/>
</dbReference>
<dbReference type="SMR" id="B8G6L3"/>
<dbReference type="STRING" id="326427.Cagg_1036"/>
<dbReference type="KEGG" id="cag:Cagg_1036"/>
<dbReference type="eggNOG" id="COG1007">
    <property type="taxonomic scope" value="Bacteria"/>
</dbReference>
<dbReference type="HOGENOM" id="CLU_007100_1_4_0"/>
<dbReference type="OrthoDB" id="9807568at2"/>
<dbReference type="Proteomes" id="UP000002508">
    <property type="component" value="Chromosome"/>
</dbReference>
<dbReference type="GO" id="GO:0005886">
    <property type="term" value="C:plasma membrane"/>
    <property type="evidence" value="ECO:0007669"/>
    <property type="project" value="UniProtKB-SubCell"/>
</dbReference>
<dbReference type="GO" id="GO:0008137">
    <property type="term" value="F:NADH dehydrogenase (ubiquinone) activity"/>
    <property type="evidence" value="ECO:0007669"/>
    <property type="project" value="InterPro"/>
</dbReference>
<dbReference type="GO" id="GO:0050136">
    <property type="term" value="F:NADH:ubiquinone reductase (non-electrogenic) activity"/>
    <property type="evidence" value="ECO:0007669"/>
    <property type="project" value="UniProtKB-UniRule"/>
</dbReference>
<dbReference type="GO" id="GO:0048038">
    <property type="term" value="F:quinone binding"/>
    <property type="evidence" value="ECO:0007669"/>
    <property type="project" value="UniProtKB-KW"/>
</dbReference>
<dbReference type="GO" id="GO:0042773">
    <property type="term" value="P:ATP synthesis coupled electron transport"/>
    <property type="evidence" value="ECO:0007669"/>
    <property type="project" value="InterPro"/>
</dbReference>
<dbReference type="HAMAP" id="MF_00445">
    <property type="entry name" value="NDH1_NuoN_1"/>
    <property type="match status" value="1"/>
</dbReference>
<dbReference type="InterPro" id="IPR010096">
    <property type="entry name" value="NADH-Q_OxRdtase_suN/2"/>
</dbReference>
<dbReference type="InterPro" id="IPR001750">
    <property type="entry name" value="ND/Mrp_TM"/>
</dbReference>
<dbReference type="NCBIfam" id="TIGR01770">
    <property type="entry name" value="NDH_I_N"/>
    <property type="match status" value="1"/>
</dbReference>
<dbReference type="PANTHER" id="PTHR22773">
    <property type="entry name" value="NADH DEHYDROGENASE"/>
    <property type="match status" value="1"/>
</dbReference>
<dbReference type="Pfam" id="PF00361">
    <property type="entry name" value="Proton_antipo_M"/>
    <property type="match status" value="1"/>
</dbReference>
<dbReference type="PRINTS" id="PR01434">
    <property type="entry name" value="NADHDHGNASE5"/>
</dbReference>